<reference key="1">
    <citation type="submission" date="2007-05" db="EMBL/GenBank/DDBJ databases">
        <title>Complete sequence of Pseudomonas putida F1.</title>
        <authorList>
            <consortium name="US DOE Joint Genome Institute"/>
            <person name="Copeland A."/>
            <person name="Lucas S."/>
            <person name="Lapidus A."/>
            <person name="Barry K."/>
            <person name="Detter J.C."/>
            <person name="Glavina del Rio T."/>
            <person name="Hammon N."/>
            <person name="Israni S."/>
            <person name="Dalin E."/>
            <person name="Tice H."/>
            <person name="Pitluck S."/>
            <person name="Chain P."/>
            <person name="Malfatti S."/>
            <person name="Shin M."/>
            <person name="Vergez L."/>
            <person name="Schmutz J."/>
            <person name="Larimer F."/>
            <person name="Land M."/>
            <person name="Hauser L."/>
            <person name="Kyrpides N."/>
            <person name="Lykidis A."/>
            <person name="Parales R."/>
            <person name="Richardson P."/>
        </authorList>
    </citation>
    <scope>NUCLEOTIDE SEQUENCE [LARGE SCALE GENOMIC DNA]</scope>
    <source>
        <strain>ATCC 700007 / DSM 6899 / JCM 31910 / BCRC 17059 / LMG 24140 / F1</strain>
    </source>
</reference>
<comment type="function">
    <text evidence="1">Catalyzes the ferrous insertion into protoporphyrin IX.</text>
</comment>
<comment type="catalytic activity">
    <reaction evidence="1">
        <text>heme b + 2 H(+) = protoporphyrin IX + Fe(2+)</text>
        <dbReference type="Rhea" id="RHEA:22584"/>
        <dbReference type="ChEBI" id="CHEBI:15378"/>
        <dbReference type="ChEBI" id="CHEBI:29033"/>
        <dbReference type="ChEBI" id="CHEBI:57306"/>
        <dbReference type="ChEBI" id="CHEBI:60344"/>
        <dbReference type="EC" id="4.98.1.1"/>
    </reaction>
</comment>
<comment type="pathway">
    <text evidence="1">Porphyrin-containing compound metabolism; protoheme biosynthesis; protoheme from protoporphyrin-IX: step 1/1.</text>
</comment>
<comment type="subcellular location">
    <subcellularLocation>
        <location evidence="1">Cytoplasm</location>
    </subcellularLocation>
</comment>
<comment type="similarity">
    <text evidence="1">Belongs to the ferrochelatase family.</text>
</comment>
<name>HEMH_PSEP1</name>
<dbReference type="EC" id="4.98.1.1" evidence="1"/>
<dbReference type="EMBL" id="CP000712">
    <property type="protein sequence ID" value="ABQ76936.1"/>
    <property type="molecule type" value="Genomic_DNA"/>
</dbReference>
<dbReference type="SMR" id="A5VYH6"/>
<dbReference type="KEGG" id="ppf:Pput_0772"/>
<dbReference type="eggNOG" id="COG0276">
    <property type="taxonomic scope" value="Bacteria"/>
</dbReference>
<dbReference type="HOGENOM" id="CLU_018884_0_1_6"/>
<dbReference type="UniPathway" id="UPA00252">
    <property type="reaction ID" value="UER00325"/>
</dbReference>
<dbReference type="GO" id="GO:0005737">
    <property type="term" value="C:cytoplasm"/>
    <property type="evidence" value="ECO:0007669"/>
    <property type="project" value="UniProtKB-SubCell"/>
</dbReference>
<dbReference type="GO" id="GO:0004325">
    <property type="term" value="F:ferrochelatase activity"/>
    <property type="evidence" value="ECO:0007669"/>
    <property type="project" value="UniProtKB-UniRule"/>
</dbReference>
<dbReference type="GO" id="GO:0046872">
    <property type="term" value="F:metal ion binding"/>
    <property type="evidence" value="ECO:0007669"/>
    <property type="project" value="UniProtKB-KW"/>
</dbReference>
<dbReference type="GO" id="GO:0006783">
    <property type="term" value="P:heme biosynthetic process"/>
    <property type="evidence" value="ECO:0007669"/>
    <property type="project" value="UniProtKB-UniRule"/>
</dbReference>
<dbReference type="CDD" id="cd00419">
    <property type="entry name" value="Ferrochelatase_C"/>
    <property type="match status" value="1"/>
</dbReference>
<dbReference type="CDD" id="cd03411">
    <property type="entry name" value="Ferrochelatase_N"/>
    <property type="match status" value="1"/>
</dbReference>
<dbReference type="Gene3D" id="3.40.50.1400">
    <property type="match status" value="2"/>
</dbReference>
<dbReference type="HAMAP" id="MF_00323">
    <property type="entry name" value="Ferrochelatase"/>
    <property type="match status" value="1"/>
</dbReference>
<dbReference type="InterPro" id="IPR001015">
    <property type="entry name" value="Ferrochelatase"/>
</dbReference>
<dbReference type="InterPro" id="IPR033644">
    <property type="entry name" value="Ferrochelatase_C"/>
</dbReference>
<dbReference type="InterPro" id="IPR033659">
    <property type="entry name" value="Ferrochelatase_N"/>
</dbReference>
<dbReference type="NCBIfam" id="TIGR00109">
    <property type="entry name" value="hemH"/>
    <property type="match status" value="1"/>
</dbReference>
<dbReference type="PANTHER" id="PTHR11108">
    <property type="entry name" value="FERROCHELATASE"/>
    <property type="match status" value="1"/>
</dbReference>
<dbReference type="PANTHER" id="PTHR11108:SF1">
    <property type="entry name" value="FERROCHELATASE, MITOCHONDRIAL"/>
    <property type="match status" value="1"/>
</dbReference>
<dbReference type="Pfam" id="PF00762">
    <property type="entry name" value="Ferrochelatase"/>
    <property type="match status" value="1"/>
</dbReference>
<dbReference type="SUPFAM" id="SSF53800">
    <property type="entry name" value="Chelatase"/>
    <property type="match status" value="1"/>
</dbReference>
<proteinExistence type="inferred from homology"/>
<protein>
    <recommendedName>
        <fullName evidence="1">Ferrochelatase</fullName>
        <ecNumber evidence="1">4.98.1.1</ecNumber>
    </recommendedName>
    <alternativeName>
        <fullName evidence="1">Heme synthase</fullName>
    </alternativeName>
    <alternativeName>
        <fullName evidence="1">Protoheme ferro-lyase</fullName>
    </alternativeName>
</protein>
<gene>
    <name evidence="1" type="primary">hemH</name>
    <name type="ordered locus">Pput_0772</name>
</gene>
<keyword id="KW-0963">Cytoplasm</keyword>
<keyword id="KW-0350">Heme biosynthesis</keyword>
<keyword id="KW-0408">Iron</keyword>
<keyword id="KW-0456">Lyase</keyword>
<keyword id="KW-0479">Metal-binding</keyword>
<keyword id="KW-0627">Porphyrin biosynthesis</keyword>
<organism>
    <name type="scientific">Pseudomonas putida (strain ATCC 700007 / DSM 6899 / JCM 31910 / BCRC 17059 / LMG 24140 / F1)</name>
    <dbReference type="NCBI Taxonomy" id="351746"/>
    <lineage>
        <taxon>Bacteria</taxon>
        <taxon>Pseudomonadati</taxon>
        <taxon>Pseudomonadota</taxon>
        <taxon>Gammaproteobacteria</taxon>
        <taxon>Pseudomonadales</taxon>
        <taxon>Pseudomonadaceae</taxon>
        <taxon>Pseudomonas</taxon>
    </lineage>
</organism>
<sequence length="338" mass="37906">MTDHALLLVNLGSPASTSVADVRRYLNQFLMDPYVVDLPWPVRRLLVSLILIKRPEQSAHAYASIWWEEGSPLVVLTRRLQAAMVEHWPHGPVEIAMRYGQPALPDVLERLAAQGVRKVTLAPLYPQFADSTVTTVVDLAKQTVSERQLPLQMRVLQPFYEHPAYIEALAASARPHLETGYDHLLLSFHGLPERHLKKLFPKGVKHDLRAADCCHGATAEVRSVCYRGQCLATAKAFAQKMGIPDGKWSVSFQSRLGRDKWIEPYTETRLDELAKAGVKKLLVMCPAFVADCIETLEEIGMRGSEQFVEAGGRELVLVPCLNDHPEWVRVLADMCEKA</sequence>
<evidence type="ECO:0000255" key="1">
    <source>
        <dbReference type="HAMAP-Rule" id="MF_00323"/>
    </source>
</evidence>
<feature type="chain" id="PRO_1000019349" description="Ferrochelatase">
    <location>
        <begin position="1"/>
        <end position="338"/>
    </location>
</feature>
<feature type="binding site" evidence="1">
    <location>
        <position position="189"/>
    </location>
    <ligand>
        <name>Fe cation</name>
        <dbReference type="ChEBI" id="CHEBI:24875"/>
    </ligand>
</feature>
<feature type="binding site" evidence="1">
    <location>
        <position position="294"/>
    </location>
    <ligand>
        <name>Fe cation</name>
        <dbReference type="ChEBI" id="CHEBI:24875"/>
    </ligand>
</feature>
<accession>A5VYH6</accession>